<dbReference type="EC" id="4.2.1.33" evidence="1"/>
<dbReference type="EMBL" id="CP000083">
    <property type="protein sequence ID" value="AAZ24357.1"/>
    <property type="molecule type" value="Genomic_DNA"/>
</dbReference>
<dbReference type="RefSeq" id="WP_011044942.1">
    <property type="nucleotide sequence ID" value="NC_003910.7"/>
</dbReference>
<dbReference type="SMR" id="Q47WG1"/>
<dbReference type="STRING" id="167879.CPS_4211"/>
<dbReference type="KEGG" id="cps:CPS_4211"/>
<dbReference type="eggNOG" id="COG0066">
    <property type="taxonomic scope" value="Bacteria"/>
</dbReference>
<dbReference type="HOGENOM" id="CLU_081378_0_3_6"/>
<dbReference type="UniPathway" id="UPA00048">
    <property type="reaction ID" value="UER00071"/>
</dbReference>
<dbReference type="Proteomes" id="UP000000547">
    <property type="component" value="Chromosome"/>
</dbReference>
<dbReference type="GO" id="GO:0009316">
    <property type="term" value="C:3-isopropylmalate dehydratase complex"/>
    <property type="evidence" value="ECO:0007669"/>
    <property type="project" value="InterPro"/>
</dbReference>
<dbReference type="GO" id="GO:0003861">
    <property type="term" value="F:3-isopropylmalate dehydratase activity"/>
    <property type="evidence" value="ECO:0007669"/>
    <property type="project" value="UniProtKB-UniRule"/>
</dbReference>
<dbReference type="GO" id="GO:0009098">
    <property type="term" value="P:L-leucine biosynthetic process"/>
    <property type="evidence" value="ECO:0007669"/>
    <property type="project" value="UniProtKB-UniRule"/>
</dbReference>
<dbReference type="CDD" id="cd01577">
    <property type="entry name" value="IPMI_Swivel"/>
    <property type="match status" value="1"/>
</dbReference>
<dbReference type="FunFam" id="3.20.19.10:FF:000003">
    <property type="entry name" value="3-isopropylmalate dehydratase small subunit"/>
    <property type="match status" value="1"/>
</dbReference>
<dbReference type="Gene3D" id="3.20.19.10">
    <property type="entry name" value="Aconitase, domain 4"/>
    <property type="match status" value="1"/>
</dbReference>
<dbReference type="HAMAP" id="MF_01031">
    <property type="entry name" value="LeuD_type1"/>
    <property type="match status" value="1"/>
</dbReference>
<dbReference type="InterPro" id="IPR004431">
    <property type="entry name" value="3-IsopropMal_deHydase_ssu"/>
</dbReference>
<dbReference type="InterPro" id="IPR015928">
    <property type="entry name" value="Aconitase/3IPM_dehydase_swvl"/>
</dbReference>
<dbReference type="InterPro" id="IPR000573">
    <property type="entry name" value="AconitaseA/IPMdHydase_ssu_swvl"/>
</dbReference>
<dbReference type="InterPro" id="IPR033940">
    <property type="entry name" value="IPMI_Swivel"/>
</dbReference>
<dbReference type="InterPro" id="IPR050075">
    <property type="entry name" value="LeuD"/>
</dbReference>
<dbReference type="NCBIfam" id="TIGR00171">
    <property type="entry name" value="leuD"/>
    <property type="match status" value="1"/>
</dbReference>
<dbReference type="NCBIfam" id="NF002458">
    <property type="entry name" value="PRK01641.1"/>
    <property type="match status" value="1"/>
</dbReference>
<dbReference type="PANTHER" id="PTHR43345:SF5">
    <property type="entry name" value="3-ISOPROPYLMALATE DEHYDRATASE SMALL SUBUNIT"/>
    <property type="match status" value="1"/>
</dbReference>
<dbReference type="PANTHER" id="PTHR43345">
    <property type="entry name" value="3-ISOPROPYLMALATE DEHYDRATASE SMALL SUBUNIT 2-RELATED-RELATED"/>
    <property type="match status" value="1"/>
</dbReference>
<dbReference type="Pfam" id="PF00694">
    <property type="entry name" value="Aconitase_C"/>
    <property type="match status" value="1"/>
</dbReference>
<dbReference type="SUPFAM" id="SSF52016">
    <property type="entry name" value="LeuD/IlvD-like"/>
    <property type="match status" value="1"/>
</dbReference>
<name>LEUD_COLP3</name>
<evidence type="ECO:0000255" key="1">
    <source>
        <dbReference type="HAMAP-Rule" id="MF_01031"/>
    </source>
</evidence>
<keyword id="KW-0028">Amino-acid biosynthesis</keyword>
<keyword id="KW-0100">Branched-chain amino acid biosynthesis</keyword>
<keyword id="KW-0432">Leucine biosynthesis</keyword>
<keyword id="KW-0456">Lyase</keyword>
<organism>
    <name type="scientific">Colwellia psychrerythraea (strain 34H / ATCC BAA-681)</name>
    <name type="common">Vibrio psychroerythus</name>
    <dbReference type="NCBI Taxonomy" id="167879"/>
    <lineage>
        <taxon>Bacteria</taxon>
        <taxon>Pseudomonadati</taxon>
        <taxon>Pseudomonadota</taxon>
        <taxon>Gammaproteobacteria</taxon>
        <taxon>Alteromonadales</taxon>
        <taxon>Colwelliaceae</taxon>
        <taxon>Colwellia</taxon>
    </lineage>
</organism>
<sequence>MEKFNTHTGLVVPLDVANVDTDQIIPKQFLQKTERVGFGVHLFHDSRYLDHDGTQENPDFVINKPEYKGASILLAGENFGCGSSREHAPWALQEYGFKVIIASSFADIFYGNCINVGLLPIKLTEAEIEQLFKLSPNAQLTLTVDLPNNVVTCGELSFKFSLNEFQQYSLENGVDSVGWTLNKLDTIKAFEEKMPAWQ</sequence>
<gene>
    <name evidence="1" type="primary">leuD</name>
    <name type="ordered locus">CPS_4211</name>
</gene>
<protein>
    <recommendedName>
        <fullName evidence="1">3-isopropylmalate dehydratase small subunit</fullName>
        <ecNumber evidence="1">4.2.1.33</ecNumber>
    </recommendedName>
    <alternativeName>
        <fullName evidence="1">Alpha-IPM isomerase</fullName>
        <shortName evidence="1">IPMI</shortName>
    </alternativeName>
    <alternativeName>
        <fullName evidence="1">Isopropylmalate isomerase</fullName>
    </alternativeName>
</protein>
<accession>Q47WG1</accession>
<feature type="chain" id="PRO_0000141812" description="3-isopropylmalate dehydratase small subunit">
    <location>
        <begin position="1"/>
        <end position="198"/>
    </location>
</feature>
<proteinExistence type="inferred from homology"/>
<comment type="function">
    <text evidence="1">Catalyzes the isomerization between 2-isopropylmalate and 3-isopropylmalate, via the formation of 2-isopropylmaleate.</text>
</comment>
<comment type="catalytic activity">
    <reaction evidence="1">
        <text>(2R,3S)-3-isopropylmalate = (2S)-2-isopropylmalate</text>
        <dbReference type="Rhea" id="RHEA:32287"/>
        <dbReference type="ChEBI" id="CHEBI:1178"/>
        <dbReference type="ChEBI" id="CHEBI:35121"/>
        <dbReference type="EC" id="4.2.1.33"/>
    </reaction>
</comment>
<comment type="pathway">
    <text evidence="1">Amino-acid biosynthesis; L-leucine biosynthesis; L-leucine from 3-methyl-2-oxobutanoate: step 2/4.</text>
</comment>
<comment type="subunit">
    <text evidence="1">Heterodimer of LeuC and LeuD.</text>
</comment>
<comment type="similarity">
    <text evidence="1">Belongs to the LeuD family. LeuD type 1 subfamily.</text>
</comment>
<reference key="1">
    <citation type="journal article" date="2005" name="Proc. Natl. Acad. Sci. U.S.A.">
        <title>The psychrophilic lifestyle as revealed by the genome sequence of Colwellia psychrerythraea 34H through genomic and proteomic analyses.</title>
        <authorList>
            <person name="Methe B.A."/>
            <person name="Nelson K.E."/>
            <person name="Deming J.W."/>
            <person name="Momen B."/>
            <person name="Melamud E."/>
            <person name="Zhang X."/>
            <person name="Moult J."/>
            <person name="Madupu R."/>
            <person name="Nelson W.C."/>
            <person name="Dodson R.J."/>
            <person name="Brinkac L.M."/>
            <person name="Daugherty S.C."/>
            <person name="Durkin A.S."/>
            <person name="DeBoy R.T."/>
            <person name="Kolonay J.F."/>
            <person name="Sullivan S.A."/>
            <person name="Zhou L."/>
            <person name="Davidsen T.M."/>
            <person name="Wu M."/>
            <person name="Huston A.L."/>
            <person name="Lewis M."/>
            <person name="Weaver B."/>
            <person name="Weidman J.F."/>
            <person name="Khouri H."/>
            <person name="Utterback T.R."/>
            <person name="Feldblyum T.V."/>
            <person name="Fraser C.M."/>
        </authorList>
    </citation>
    <scope>NUCLEOTIDE SEQUENCE [LARGE SCALE GENOMIC DNA]</scope>
    <source>
        <strain>34H / ATCC BAA-681</strain>
    </source>
</reference>